<protein>
    <recommendedName>
        <fullName>Beta-fructofuranosidase, cell wall isozyme</fullName>
        <ecNumber>3.2.1.26</ecNumber>
    </recommendedName>
    <alternativeName>
        <fullName>Acid invertase</fullName>
    </alternativeName>
    <alternativeName>
        <fullName>Sucrose hydrolase</fullName>
    </alternativeName>
</protein>
<feature type="signal peptide" evidence="2">
    <location>
        <begin position="1"/>
        <end position="22"/>
    </location>
</feature>
<feature type="chain" id="PRO_0000033385" description="Beta-fructofuranosidase, cell wall isozyme">
    <location>
        <begin position="23"/>
        <end position="555"/>
    </location>
</feature>
<feature type="active site" evidence="3">
    <location>
        <position position="61"/>
    </location>
</feature>
<feature type="active site" evidence="3">
    <location>
        <position position="140"/>
    </location>
</feature>
<feature type="binding site" evidence="1">
    <location>
        <begin position="58"/>
        <end position="61"/>
    </location>
    <ligand>
        <name>substrate</name>
    </ligand>
</feature>
<feature type="binding site" evidence="1">
    <location>
        <position position="77"/>
    </location>
    <ligand>
        <name>substrate</name>
    </ligand>
</feature>
<feature type="binding site" evidence="1">
    <location>
        <position position="85"/>
    </location>
    <ligand>
        <name>substrate</name>
    </ligand>
</feature>
<feature type="binding site" evidence="1">
    <location>
        <begin position="120"/>
        <end position="121"/>
    </location>
    <ligand>
        <name>substrate</name>
    </ligand>
</feature>
<feature type="binding site" evidence="1">
    <location>
        <begin position="186"/>
        <end position="187"/>
    </location>
    <ligand>
        <name>substrate</name>
    </ligand>
</feature>
<feature type="binding site" evidence="1">
    <location>
        <position position="241"/>
    </location>
    <ligand>
        <name>substrate</name>
    </ligand>
</feature>
<feature type="binding site" evidence="1">
    <location>
        <position position="277"/>
    </location>
    <ligand>
        <name>substrate</name>
    </ligand>
</feature>
<feature type="glycosylation site" description="N-linked (GlcNAc...) asparagine" evidence="2">
    <location>
        <position position="154"/>
    </location>
</feature>
<feature type="glycosylation site" description="N-linked (GlcNAc...) asparagine" evidence="2">
    <location>
        <position position="181"/>
    </location>
</feature>
<feature type="glycosylation site" description="N-linked (GlcNAc...) asparagine" evidence="2">
    <location>
        <position position="337"/>
    </location>
</feature>
<feature type="disulfide bond" evidence="1">
    <location>
        <begin position="435"/>
        <end position="481"/>
    </location>
</feature>
<name>INV1_PEA</name>
<dbReference type="EC" id="3.2.1.26"/>
<dbReference type="EMBL" id="X85327">
    <property type="protein sequence ID" value="CAA59677.1"/>
    <property type="molecule type" value="mRNA"/>
</dbReference>
<dbReference type="PIR" id="T06491">
    <property type="entry name" value="T06491"/>
</dbReference>
<dbReference type="SMR" id="Q43089"/>
<dbReference type="CAZy" id="GH32">
    <property type="family name" value="Glycoside Hydrolase Family 32"/>
</dbReference>
<dbReference type="GlyCosmos" id="Q43089">
    <property type="glycosylation" value="3 sites, No reported glycans"/>
</dbReference>
<dbReference type="GO" id="GO:0004564">
    <property type="term" value="F:beta-fructofuranosidase activity"/>
    <property type="evidence" value="ECO:0007669"/>
    <property type="project" value="UniProtKB-EC"/>
</dbReference>
<dbReference type="GO" id="GO:0005975">
    <property type="term" value="P:carbohydrate metabolic process"/>
    <property type="evidence" value="ECO:0007669"/>
    <property type="project" value="InterPro"/>
</dbReference>
<dbReference type="CDD" id="cd18624">
    <property type="entry name" value="GH32_Fruct1-like"/>
    <property type="match status" value="1"/>
</dbReference>
<dbReference type="FunFam" id="2.115.10.20:FF:000001">
    <property type="entry name" value="Beta-fructofuranosidase, insoluble isoenzyme CWINV1"/>
    <property type="match status" value="1"/>
</dbReference>
<dbReference type="Gene3D" id="2.60.120.560">
    <property type="entry name" value="Exo-inulinase, domain 1"/>
    <property type="match status" value="1"/>
</dbReference>
<dbReference type="Gene3D" id="2.115.10.20">
    <property type="entry name" value="Glycosyl hydrolase domain, family 43"/>
    <property type="match status" value="1"/>
</dbReference>
<dbReference type="InterPro" id="IPR013320">
    <property type="entry name" value="ConA-like_dom_sf"/>
</dbReference>
<dbReference type="InterPro" id="IPR050551">
    <property type="entry name" value="Fructan_Metab_Enzymes"/>
</dbReference>
<dbReference type="InterPro" id="IPR001362">
    <property type="entry name" value="Glyco_hydro_32"/>
</dbReference>
<dbReference type="InterPro" id="IPR018053">
    <property type="entry name" value="Glyco_hydro_32_AS"/>
</dbReference>
<dbReference type="InterPro" id="IPR013189">
    <property type="entry name" value="Glyco_hydro_32_C"/>
</dbReference>
<dbReference type="InterPro" id="IPR013148">
    <property type="entry name" value="Glyco_hydro_32_N"/>
</dbReference>
<dbReference type="InterPro" id="IPR023296">
    <property type="entry name" value="Glyco_hydro_beta-prop_sf"/>
</dbReference>
<dbReference type="PANTHER" id="PTHR31953">
    <property type="entry name" value="BETA-FRUCTOFURANOSIDASE, INSOLUBLE ISOENZYME CWINV1-RELATED"/>
    <property type="match status" value="1"/>
</dbReference>
<dbReference type="Pfam" id="PF08244">
    <property type="entry name" value="Glyco_hydro_32C"/>
    <property type="match status" value="1"/>
</dbReference>
<dbReference type="Pfam" id="PF00251">
    <property type="entry name" value="Glyco_hydro_32N"/>
    <property type="match status" value="1"/>
</dbReference>
<dbReference type="SMART" id="SM00640">
    <property type="entry name" value="Glyco_32"/>
    <property type="match status" value="1"/>
</dbReference>
<dbReference type="SUPFAM" id="SSF75005">
    <property type="entry name" value="Arabinanase/levansucrase/invertase"/>
    <property type="match status" value="1"/>
</dbReference>
<dbReference type="SUPFAM" id="SSF49899">
    <property type="entry name" value="Concanavalin A-like lectins/glucanases"/>
    <property type="match status" value="1"/>
</dbReference>
<dbReference type="PROSITE" id="PS00609">
    <property type="entry name" value="GLYCOSYL_HYDROL_F32"/>
    <property type="match status" value="1"/>
</dbReference>
<keyword id="KW-1015">Disulfide bond</keyword>
<keyword id="KW-0325">Glycoprotein</keyword>
<keyword id="KW-0326">Glycosidase</keyword>
<keyword id="KW-0378">Hydrolase</keyword>
<keyword id="KW-0732">Signal</keyword>
<gene>
    <name type="primary">BFRUCT1</name>
</gene>
<proteinExistence type="evidence at transcript level"/>
<reference key="1">
    <citation type="online journal article" date="1996" name="Plant Gene Register">
        <title>A cDNA clone encoding a cell Wall invertase from pea.</title>
        <authorList>
            <person name="Zhang L."/>
            <person name="Cohn N.S."/>
            <person name="Mitchell J.P."/>
        </authorList>
        <locator>PGR96-008</locator>
    </citation>
    <scope>NUCLEOTIDE SEQUENCE [MRNA]</scope>
    <source>
        <strain>cv. Little Marvel</strain>
    </source>
</reference>
<evidence type="ECO:0000250" key="1"/>
<evidence type="ECO:0000255" key="2"/>
<evidence type="ECO:0000255" key="3">
    <source>
        <dbReference type="PROSITE-ProRule" id="PRU10067"/>
    </source>
</evidence>
<evidence type="ECO:0000305" key="4"/>
<organism>
    <name type="scientific">Pisum sativum</name>
    <name type="common">Garden pea</name>
    <name type="synonym">Lathyrus oleraceus</name>
    <dbReference type="NCBI Taxonomy" id="3888"/>
    <lineage>
        <taxon>Eukaryota</taxon>
        <taxon>Viridiplantae</taxon>
        <taxon>Streptophyta</taxon>
        <taxon>Embryophyta</taxon>
        <taxon>Tracheophyta</taxon>
        <taxon>Spermatophyta</taxon>
        <taxon>Magnoliopsida</taxon>
        <taxon>eudicotyledons</taxon>
        <taxon>Gunneridae</taxon>
        <taxon>Pentapetalae</taxon>
        <taxon>rosids</taxon>
        <taxon>fabids</taxon>
        <taxon>Fabales</taxon>
        <taxon>Fabaceae</taxon>
        <taxon>Papilionoideae</taxon>
        <taxon>50 kb inversion clade</taxon>
        <taxon>NPAAA clade</taxon>
        <taxon>Hologalegina</taxon>
        <taxon>IRL clade</taxon>
        <taxon>Fabeae</taxon>
        <taxon>Pisum</taxon>
    </lineage>
</organism>
<accession>Q43089</accession>
<sequence>MAISSIFLLSLFSLIYVIPIEATHHVYQTLETLSSHHSSKSNHQPYRTAYHFQPLKNWINDPNGPMRYGGFYHLFYQYNPKGAVWGNIVWAHSVSKDLVNWTPLDHAIHPSQPSDIKGCWSGSATILPGGKPAILYTGIDPNNHQVQNIAIPKNMSDPLLREWKKSPKNPLMEPTIANKINSSSFRDPTTSWLGKDGFWRVLIGSKIDTKGMAILYKSKNFVDWVEAKHPLHSAEGTGMWECPDFYPVLDKNLLRTGVDTSRNGDDDVRHVLKVSLDDTKHDHYLIGSYDVVKDVFVPENGFEDNGFVLRYDYGKYYASKTFFDDGKNRRILLGWVNESSSVADDVKKGWSGIHTIPREIWLHESGKQLVQWPVKEIENLRMNPVNWPTKVIKGGERISITGVDSVQADVEISFEISDLGKVESLRKWIDPQLLCSQKGAGVKGGVGPFGLLVFASQGLKEYTAVFFRIFKYQDKNLVLMCSDQSRSSLNKDNDMTSYGTFVDVDPLHEKLSLRTLIDHSVVESFGGEGRACVTARVYPTLAIHDKAMLKLTSEY</sequence>
<comment type="catalytic activity">
    <reaction evidence="3">
        <text>Hydrolysis of terminal non-reducing beta-D-fructofuranoside residues in beta-D-fructofuranosides.</text>
        <dbReference type="EC" id="3.2.1.26"/>
    </reaction>
</comment>
<comment type="similarity">
    <text evidence="4">Belongs to the glycosyl hydrolase 32 family.</text>
</comment>